<organism>
    <name type="scientific">Histophilus somni (strain 2336)</name>
    <name type="common">Haemophilus somnus</name>
    <dbReference type="NCBI Taxonomy" id="228400"/>
    <lineage>
        <taxon>Bacteria</taxon>
        <taxon>Pseudomonadati</taxon>
        <taxon>Pseudomonadota</taxon>
        <taxon>Gammaproteobacteria</taxon>
        <taxon>Pasteurellales</taxon>
        <taxon>Pasteurellaceae</taxon>
        <taxon>Histophilus</taxon>
    </lineage>
</organism>
<reference key="1">
    <citation type="submission" date="2008-02" db="EMBL/GenBank/DDBJ databases">
        <title>Complete sequence of Haemophilus somnus 2336.</title>
        <authorList>
            <consortium name="US DOE Joint Genome Institute"/>
            <person name="Siddaramappa S."/>
            <person name="Duncan A.J."/>
            <person name="Challacombe J.F."/>
            <person name="Rainey D."/>
            <person name="Gillaspy A.F."/>
            <person name="Carson M."/>
            <person name="Gipson J."/>
            <person name="Gipson M."/>
            <person name="Bruce D."/>
            <person name="Detter J.C."/>
            <person name="Han C.S."/>
            <person name="Land M."/>
            <person name="Tapia R."/>
            <person name="Thompson L.S."/>
            <person name="Orvis J."/>
            <person name="Zaitshik J."/>
            <person name="Barnes G."/>
            <person name="Brettin T.S."/>
            <person name="Dyer D.W."/>
            <person name="Inzana T.J."/>
        </authorList>
    </citation>
    <scope>NUCLEOTIDE SEQUENCE [LARGE SCALE GENOMIC DNA]</scope>
    <source>
        <strain>2336</strain>
    </source>
</reference>
<gene>
    <name evidence="1" type="primary">hldD</name>
    <name type="ordered locus">HSM_0397</name>
</gene>
<evidence type="ECO:0000255" key="1">
    <source>
        <dbReference type="HAMAP-Rule" id="MF_01601"/>
    </source>
</evidence>
<protein>
    <recommendedName>
        <fullName evidence="1">ADP-L-glycero-D-manno-heptose-6-epimerase</fullName>
        <ecNumber evidence="1">5.1.3.20</ecNumber>
    </recommendedName>
    <alternativeName>
        <fullName evidence="1">ADP-L-glycero-beta-D-manno-heptose-6-epimerase</fullName>
        <shortName evidence="1">ADP-glyceromanno-heptose 6-epimerase</shortName>
        <shortName evidence="1">ADP-hep 6-epimerase</shortName>
        <shortName evidence="1">AGME</shortName>
    </alternativeName>
</protein>
<name>HLDD_HISS2</name>
<comment type="function">
    <text evidence="1">Catalyzes the interconversion between ADP-D-glycero-beta-D-manno-heptose and ADP-L-glycero-beta-D-manno-heptose via an epimerization at carbon 6 of the heptose.</text>
</comment>
<comment type="catalytic activity">
    <reaction evidence="1">
        <text>ADP-D-glycero-beta-D-manno-heptose = ADP-L-glycero-beta-D-manno-heptose</text>
        <dbReference type="Rhea" id="RHEA:17577"/>
        <dbReference type="ChEBI" id="CHEBI:59967"/>
        <dbReference type="ChEBI" id="CHEBI:61506"/>
        <dbReference type="EC" id="5.1.3.20"/>
    </reaction>
</comment>
<comment type="cofactor">
    <cofactor evidence="1">
        <name>NADP(+)</name>
        <dbReference type="ChEBI" id="CHEBI:58349"/>
    </cofactor>
    <text evidence="1">Binds 1 NADP(+) per subunit.</text>
</comment>
<comment type="pathway">
    <text evidence="1">Nucleotide-sugar biosynthesis; ADP-L-glycero-beta-D-manno-heptose biosynthesis; ADP-L-glycero-beta-D-manno-heptose from D-glycero-beta-D-manno-heptose 7-phosphate: step 4/4.</text>
</comment>
<comment type="subunit">
    <text evidence="1">Homopentamer.</text>
</comment>
<comment type="domain">
    <text evidence="1">Contains a large N-terminal NADP-binding domain, and a smaller C-terminal substrate-binding domain.</text>
</comment>
<comment type="similarity">
    <text evidence="1">Belongs to the NAD(P)-dependent epimerase/dehydratase family. HldD subfamily.</text>
</comment>
<keyword id="KW-0119">Carbohydrate metabolism</keyword>
<keyword id="KW-0413">Isomerase</keyword>
<keyword id="KW-0521">NADP</keyword>
<accession>B0UWU3</accession>
<dbReference type="EC" id="5.1.3.20" evidence="1"/>
<dbReference type="EMBL" id="CP000947">
    <property type="protein sequence ID" value="ACA32037.1"/>
    <property type="molecule type" value="Genomic_DNA"/>
</dbReference>
<dbReference type="RefSeq" id="WP_011609759.1">
    <property type="nucleotide sequence ID" value="NC_010519.1"/>
</dbReference>
<dbReference type="SMR" id="B0UWU3"/>
<dbReference type="STRING" id="228400.HSM_0397"/>
<dbReference type="GeneID" id="31486677"/>
<dbReference type="KEGG" id="hsm:HSM_0397"/>
<dbReference type="HOGENOM" id="CLU_007383_1_3_6"/>
<dbReference type="UniPathway" id="UPA00356">
    <property type="reaction ID" value="UER00440"/>
</dbReference>
<dbReference type="GO" id="GO:0008712">
    <property type="term" value="F:ADP-glyceromanno-heptose 6-epimerase activity"/>
    <property type="evidence" value="ECO:0007669"/>
    <property type="project" value="UniProtKB-UniRule"/>
</dbReference>
<dbReference type="GO" id="GO:0050661">
    <property type="term" value="F:NADP binding"/>
    <property type="evidence" value="ECO:0007669"/>
    <property type="project" value="InterPro"/>
</dbReference>
<dbReference type="GO" id="GO:0097171">
    <property type="term" value="P:ADP-L-glycero-beta-D-manno-heptose biosynthetic process"/>
    <property type="evidence" value="ECO:0007669"/>
    <property type="project" value="UniProtKB-UniPathway"/>
</dbReference>
<dbReference type="GO" id="GO:0005975">
    <property type="term" value="P:carbohydrate metabolic process"/>
    <property type="evidence" value="ECO:0007669"/>
    <property type="project" value="UniProtKB-UniRule"/>
</dbReference>
<dbReference type="CDD" id="cd05248">
    <property type="entry name" value="ADP_GME_SDR_e"/>
    <property type="match status" value="1"/>
</dbReference>
<dbReference type="Gene3D" id="3.40.50.720">
    <property type="entry name" value="NAD(P)-binding Rossmann-like Domain"/>
    <property type="match status" value="1"/>
</dbReference>
<dbReference type="Gene3D" id="3.90.25.10">
    <property type="entry name" value="UDP-galactose 4-epimerase, domain 1"/>
    <property type="match status" value="1"/>
</dbReference>
<dbReference type="HAMAP" id="MF_01601">
    <property type="entry name" value="Heptose_epimerase"/>
    <property type="match status" value="1"/>
</dbReference>
<dbReference type="InterPro" id="IPR001509">
    <property type="entry name" value="Epimerase_deHydtase"/>
</dbReference>
<dbReference type="InterPro" id="IPR011912">
    <property type="entry name" value="Heptose_epim"/>
</dbReference>
<dbReference type="InterPro" id="IPR036291">
    <property type="entry name" value="NAD(P)-bd_dom_sf"/>
</dbReference>
<dbReference type="NCBIfam" id="TIGR02197">
    <property type="entry name" value="heptose_epim"/>
    <property type="match status" value="1"/>
</dbReference>
<dbReference type="NCBIfam" id="NF008360">
    <property type="entry name" value="PRK11150.1"/>
    <property type="match status" value="1"/>
</dbReference>
<dbReference type="PANTHER" id="PTHR43103:SF3">
    <property type="entry name" value="ADP-L-GLYCERO-D-MANNO-HEPTOSE-6-EPIMERASE"/>
    <property type="match status" value="1"/>
</dbReference>
<dbReference type="PANTHER" id="PTHR43103">
    <property type="entry name" value="NUCLEOSIDE-DIPHOSPHATE-SUGAR EPIMERASE"/>
    <property type="match status" value="1"/>
</dbReference>
<dbReference type="Pfam" id="PF01370">
    <property type="entry name" value="Epimerase"/>
    <property type="match status" value="1"/>
</dbReference>
<dbReference type="SUPFAM" id="SSF51735">
    <property type="entry name" value="NAD(P)-binding Rossmann-fold domains"/>
    <property type="match status" value="1"/>
</dbReference>
<feature type="chain" id="PRO_1000088011" description="ADP-L-glycero-D-manno-heptose-6-epimerase">
    <location>
        <begin position="1"/>
        <end position="309"/>
    </location>
</feature>
<feature type="active site" description="Proton acceptor" evidence="1">
    <location>
        <position position="139"/>
    </location>
</feature>
<feature type="active site" description="Proton acceptor" evidence="1">
    <location>
        <position position="177"/>
    </location>
</feature>
<feature type="binding site" evidence="1">
    <location>
        <begin position="10"/>
        <end position="11"/>
    </location>
    <ligand>
        <name>NADP(+)</name>
        <dbReference type="ChEBI" id="CHEBI:58349"/>
    </ligand>
</feature>
<feature type="binding site" evidence="1">
    <location>
        <begin position="31"/>
        <end position="32"/>
    </location>
    <ligand>
        <name>NADP(+)</name>
        <dbReference type="ChEBI" id="CHEBI:58349"/>
    </ligand>
</feature>
<feature type="binding site" evidence="1">
    <location>
        <position position="38"/>
    </location>
    <ligand>
        <name>NADP(+)</name>
        <dbReference type="ChEBI" id="CHEBI:58349"/>
    </ligand>
</feature>
<feature type="binding site" evidence="1">
    <location>
        <position position="53"/>
    </location>
    <ligand>
        <name>NADP(+)</name>
        <dbReference type="ChEBI" id="CHEBI:58349"/>
    </ligand>
</feature>
<feature type="binding site" evidence="1">
    <location>
        <begin position="75"/>
        <end position="79"/>
    </location>
    <ligand>
        <name>NADP(+)</name>
        <dbReference type="ChEBI" id="CHEBI:58349"/>
    </ligand>
</feature>
<feature type="binding site" evidence="1">
    <location>
        <position position="92"/>
    </location>
    <ligand>
        <name>NADP(+)</name>
        <dbReference type="ChEBI" id="CHEBI:58349"/>
    </ligand>
</feature>
<feature type="binding site" evidence="1">
    <location>
        <position position="143"/>
    </location>
    <ligand>
        <name>NADP(+)</name>
        <dbReference type="ChEBI" id="CHEBI:58349"/>
    </ligand>
</feature>
<feature type="binding site" evidence="1">
    <location>
        <position position="168"/>
    </location>
    <ligand>
        <name>substrate</name>
    </ligand>
</feature>
<feature type="binding site" evidence="1">
    <location>
        <position position="169"/>
    </location>
    <ligand>
        <name>NADP(+)</name>
        <dbReference type="ChEBI" id="CHEBI:58349"/>
    </ligand>
</feature>
<feature type="binding site" evidence="1">
    <location>
        <position position="177"/>
    </location>
    <ligand>
        <name>NADP(+)</name>
        <dbReference type="ChEBI" id="CHEBI:58349"/>
    </ligand>
</feature>
<feature type="binding site" evidence="1">
    <location>
        <position position="179"/>
    </location>
    <ligand>
        <name>substrate</name>
    </ligand>
</feature>
<feature type="binding site" evidence="1">
    <location>
        <position position="186"/>
    </location>
    <ligand>
        <name>substrate</name>
    </ligand>
</feature>
<feature type="binding site" evidence="1">
    <location>
        <begin position="200"/>
        <end position="203"/>
    </location>
    <ligand>
        <name>substrate</name>
    </ligand>
</feature>
<feature type="binding site" evidence="1">
    <location>
        <position position="208"/>
    </location>
    <ligand>
        <name>substrate</name>
    </ligand>
</feature>
<feature type="binding site" evidence="1">
    <location>
        <position position="271"/>
    </location>
    <ligand>
        <name>substrate</name>
    </ligand>
</feature>
<sequence>MIIVTGGAGLIGSNIIAALNDMGRRDILVVDNLTDGTKFVNLVDLDIADYCDKEDFIASIIAGDDFGDIDAIFHQGACSATTEWNGKYLMQNNYEYSKELLHYCLLREIPFFYASSAATYGDKTDFIEERQFEGPLNVYGYSKFLFDEYVRQILPQATSPVCGFKYFNVYGPREQHKGSMASVAFHLNNQMLKGENPKLFAGSEHFLRDFVYVGDVAKVNLWAWQHGISGIYNCGTGRAESFEQVARAVLNYHGKGEIETIPFPEHLKSRYQEYTQANLTKLRAAGYQAEFKSVAEGVAEYMQWLNRKS</sequence>
<proteinExistence type="inferred from homology"/>